<dbReference type="EMBL" id="U00089">
    <property type="protein sequence ID" value="AAG34757.1"/>
    <property type="molecule type" value="Genomic_DNA"/>
</dbReference>
<dbReference type="RefSeq" id="NP_109930.1">
    <property type="nucleotide sequence ID" value="NC_000912.1"/>
</dbReference>
<dbReference type="RefSeq" id="WP_010874599.1">
    <property type="nucleotide sequence ID" value="NZ_OU342337.1"/>
</dbReference>
<dbReference type="SMR" id="Q9EXD0"/>
<dbReference type="STRING" id="272634.MPN_242"/>
<dbReference type="EnsemblBacteria" id="AAG34757">
    <property type="protein sequence ID" value="AAG34757"/>
    <property type="gene ID" value="MPN_242"/>
</dbReference>
<dbReference type="GeneID" id="66609112"/>
<dbReference type="KEGG" id="mpn:MPN_242"/>
<dbReference type="PATRIC" id="fig|272634.6.peg.261"/>
<dbReference type="HOGENOM" id="CLU_196584_0_0_14"/>
<dbReference type="OrthoDB" id="401067at2"/>
<dbReference type="BioCyc" id="MPNE272634:G1GJ3-384-MONOMER"/>
<dbReference type="Proteomes" id="UP000000808">
    <property type="component" value="Chromosome"/>
</dbReference>
<dbReference type="GO" id="GO:0005886">
    <property type="term" value="C:plasma membrane"/>
    <property type="evidence" value="ECO:0007669"/>
    <property type="project" value="UniProtKB-SubCell"/>
</dbReference>
<dbReference type="GO" id="GO:0015450">
    <property type="term" value="F:protein-transporting ATPase activity"/>
    <property type="evidence" value="ECO:0007669"/>
    <property type="project" value="InterPro"/>
</dbReference>
<dbReference type="GO" id="GO:0009306">
    <property type="term" value="P:protein secretion"/>
    <property type="evidence" value="ECO:0007669"/>
    <property type="project" value="InterPro"/>
</dbReference>
<dbReference type="InterPro" id="IPR004692">
    <property type="entry name" value="SecG"/>
</dbReference>
<dbReference type="NCBIfam" id="TIGR00810">
    <property type="entry name" value="secG"/>
    <property type="match status" value="1"/>
</dbReference>
<feature type="chain" id="PRO_0000157232" description="Probable protein-export membrane protein SecG">
    <location>
        <begin position="1"/>
        <end position="76"/>
    </location>
</feature>
<feature type="transmembrane region" description="Helical" evidence="2">
    <location>
        <begin position="3"/>
        <end position="23"/>
    </location>
</feature>
<feature type="transmembrane region" description="Helical" evidence="2">
    <location>
        <begin position="56"/>
        <end position="76"/>
    </location>
</feature>
<evidence type="ECO:0000250" key="1"/>
<evidence type="ECO:0000255" key="2"/>
<evidence type="ECO:0000305" key="3"/>
<accession>Q9EXD0</accession>
<proteinExistence type="inferred from homology"/>
<comment type="function">
    <text evidence="1">Involved in protein export. Participates in an early event of protein translocation (By similarity).</text>
</comment>
<comment type="subcellular location">
    <subcellularLocation>
        <location evidence="1">Cell membrane</location>
        <topology evidence="1">Multi-pass membrane protein</topology>
    </subcellularLocation>
</comment>
<comment type="similarity">
    <text evidence="3">Belongs to the SecG family.</text>
</comment>
<organism>
    <name type="scientific">Mycoplasma pneumoniae (strain ATCC 29342 / M129 / Subtype 1)</name>
    <name type="common">Mycoplasmoides pneumoniae</name>
    <dbReference type="NCBI Taxonomy" id="272634"/>
    <lineage>
        <taxon>Bacteria</taxon>
        <taxon>Bacillati</taxon>
        <taxon>Mycoplasmatota</taxon>
        <taxon>Mycoplasmoidales</taxon>
        <taxon>Mycoplasmoidaceae</taxon>
        <taxon>Mycoplasmoides</taxon>
    </lineage>
</organism>
<keyword id="KW-1003">Cell membrane</keyword>
<keyword id="KW-0472">Membrane</keyword>
<keyword id="KW-0653">Protein transport</keyword>
<keyword id="KW-1185">Reference proteome</keyword>
<keyword id="KW-0811">Translocation</keyword>
<keyword id="KW-0812">Transmembrane</keyword>
<keyword id="KW-1133">Transmembrane helix</keyword>
<keyword id="KW-0813">Transport</keyword>
<name>SECG_MYCPN</name>
<gene>
    <name type="primary">secG</name>
    <name type="ordered locus">MPN_242</name>
    <name type="ORF">MP589.1</name>
</gene>
<sequence>MDAIQIVMFVMAILCLIIGLLLSNHGSTGGLASLSGQDLEIFRKTKDRGIVKILQITMFILVVLFLILGLVFHFAL</sequence>
<protein>
    <recommendedName>
        <fullName>Probable protein-export membrane protein SecG</fullName>
    </recommendedName>
</protein>
<reference key="1">
    <citation type="journal article" date="1996" name="Nucleic Acids Res.">
        <title>Complete sequence analysis of the genome of the bacterium Mycoplasma pneumoniae.</title>
        <authorList>
            <person name="Himmelreich R."/>
            <person name="Hilbert H."/>
            <person name="Plagens H."/>
            <person name="Pirkl E."/>
            <person name="Li B.-C."/>
            <person name="Herrmann R."/>
        </authorList>
    </citation>
    <scope>NUCLEOTIDE SEQUENCE [LARGE SCALE GENOMIC DNA]</scope>
    <source>
        <strain>ATCC 29342 / M129 / Subtype 1</strain>
    </source>
</reference>
<reference key="2">
    <citation type="journal article" date="2000" name="Nucleic Acids Res.">
        <title>Re-annotating the Mycoplasma pneumoniae genome sequence: adding value, function and reading frames.</title>
        <authorList>
            <person name="Dandekar T."/>
            <person name="Huynen M."/>
            <person name="Regula J.T."/>
            <person name="Ueberle B."/>
            <person name="Zimmermann C.U."/>
            <person name="Andrade M.A."/>
            <person name="Doerks T."/>
            <person name="Sanchez-Pulido L."/>
            <person name="Snel B."/>
            <person name="Suyama M."/>
            <person name="Yuan Y.P."/>
            <person name="Herrmann R."/>
            <person name="Bork P."/>
        </authorList>
    </citation>
    <scope>IDENTIFICATION</scope>
    <source>
        <strain>ATCC 29342 / M129 / Subtype 1</strain>
    </source>
</reference>